<accession>Q5X6U5</accession>
<sequence length="363" mass="39652">MSPSIVFTGGGTAGHVTPNIALIKEFRKEGWNVEYIGSVSGIEKEMIEPLDIPFHGVSSGKLRRYFSLKNLLDPFKIVLGIIQSSLLFYKIKPDVVFSKGGFVAFPVVVGAWLNRIPVVAHESDMSPGLANRLSFPFVNKICLTFDAGKKYFKRQDKIEVTGTPIRQQLLTGNRMKGLELCGFNSSKPCLLVVGGSLGAGSINSCIRSALKQLTSEFQVIHLCGKGKLDSSLVGVEGYCQFEYANEELADLFAASSVVISRAGANSLYEILALGKPHILIPISSQVSRGDQIQNARYFQGLGISVVIQDELLKADVLLQAVQDVMRKKDEIDNKIKALKIESATDKIVAIIKEQAHVQTPRIV</sequence>
<proteinExistence type="inferred from homology"/>
<feature type="chain" id="PRO_0000225064" description="UDP-N-acetylglucosamine--N-acetylmuramyl-(pentapeptide) pyrophosphoryl-undecaprenol N-acetylglucosamine transferase">
    <location>
        <begin position="1"/>
        <end position="363"/>
    </location>
</feature>
<feature type="binding site" evidence="1">
    <location>
        <begin position="12"/>
        <end position="14"/>
    </location>
    <ligand>
        <name>UDP-N-acetyl-alpha-D-glucosamine</name>
        <dbReference type="ChEBI" id="CHEBI:57705"/>
    </ligand>
</feature>
<feature type="binding site" evidence="1">
    <location>
        <position position="166"/>
    </location>
    <ligand>
        <name>UDP-N-acetyl-alpha-D-glucosamine</name>
        <dbReference type="ChEBI" id="CHEBI:57705"/>
    </ligand>
</feature>
<feature type="binding site" evidence="1">
    <location>
        <position position="196"/>
    </location>
    <ligand>
        <name>UDP-N-acetyl-alpha-D-glucosamine</name>
        <dbReference type="ChEBI" id="CHEBI:57705"/>
    </ligand>
</feature>
<feature type="binding site" evidence="1">
    <location>
        <position position="291"/>
    </location>
    <ligand>
        <name>UDP-N-acetyl-alpha-D-glucosamine</name>
        <dbReference type="ChEBI" id="CHEBI:57705"/>
    </ligand>
</feature>
<reference key="1">
    <citation type="journal article" date="2004" name="Nat. Genet.">
        <title>Evidence in the Legionella pneumophila genome for exploitation of host cell functions and high genome plasticity.</title>
        <authorList>
            <person name="Cazalet C."/>
            <person name="Rusniok C."/>
            <person name="Brueggemann H."/>
            <person name="Zidane N."/>
            <person name="Magnier A."/>
            <person name="Ma L."/>
            <person name="Tichit M."/>
            <person name="Jarraud S."/>
            <person name="Bouchier C."/>
            <person name="Vandenesch F."/>
            <person name="Kunst F."/>
            <person name="Etienne J."/>
            <person name="Glaser P."/>
            <person name="Buchrieser C."/>
        </authorList>
    </citation>
    <scope>NUCLEOTIDE SEQUENCE [LARGE SCALE GENOMIC DNA]</scope>
    <source>
        <strain>Paris</strain>
    </source>
</reference>
<dbReference type="EC" id="2.4.1.227" evidence="1"/>
<dbReference type="EMBL" id="CR628336">
    <property type="protein sequence ID" value="CAH12021.1"/>
    <property type="molecule type" value="Genomic_DNA"/>
</dbReference>
<dbReference type="RefSeq" id="WP_010946544.1">
    <property type="nucleotide sequence ID" value="NC_006368.1"/>
</dbReference>
<dbReference type="SMR" id="Q5X6U5"/>
<dbReference type="CAZy" id="GT28">
    <property type="family name" value="Glycosyltransferase Family 28"/>
</dbReference>
<dbReference type="KEGG" id="lpp:lpp0870"/>
<dbReference type="LegioList" id="lpp0870"/>
<dbReference type="HOGENOM" id="CLU_037404_0_0_6"/>
<dbReference type="UniPathway" id="UPA00219"/>
<dbReference type="GO" id="GO:0005886">
    <property type="term" value="C:plasma membrane"/>
    <property type="evidence" value="ECO:0007669"/>
    <property type="project" value="UniProtKB-SubCell"/>
</dbReference>
<dbReference type="GO" id="GO:0051991">
    <property type="term" value="F:UDP-N-acetyl-D-glucosamine:N-acetylmuramoyl-L-alanyl-D-glutamyl-meso-2,6-diaminopimelyl-D-alanyl-D-alanine-diphosphoundecaprenol 4-beta-N-acetylglucosaminlytransferase activity"/>
    <property type="evidence" value="ECO:0007669"/>
    <property type="project" value="RHEA"/>
</dbReference>
<dbReference type="GO" id="GO:0050511">
    <property type="term" value="F:undecaprenyldiphospho-muramoylpentapeptide beta-N-acetylglucosaminyltransferase activity"/>
    <property type="evidence" value="ECO:0007669"/>
    <property type="project" value="UniProtKB-UniRule"/>
</dbReference>
<dbReference type="GO" id="GO:0005975">
    <property type="term" value="P:carbohydrate metabolic process"/>
    <property type="evidence" value="ECO:0007669"/>
    <property type="project" value="InterPro"/>
</dbReference>
<dbReference type="GO" id="GO:0051301">
    <property type="term" value="P:cell division"/>
    <property type="evidence" value="ECO:0007669"/>
    <property type="project" value="UniProtKB-KW"/>
</dbReference>
<dbReference type="GO" id="GO:0071555">
    <property type="term" value="P:cell wall organization"/>
    <property type="evidence" value="ECO:0007669"/>
    <property type="project" value="UniProtKB-KW"/>
</dbReference>
<dbReference type="GO" id="GO:0030259">
    <property type="term" value="P:lipid glycosylation"/>
    <property type="evidence" value="ECO:0007669"/>
    <property type="project" value="UniProtKB-UniRule"/>
</dbReference>
<dbReference type="GO" id="GO:0009252">
    <property type="term" value="P:peptidoglycan biosynthetic process"/>
    <property type="evidence" value="ECO:0007669"/>
    <property type="project" value="UniProtKB-UniRule"/>
</dbReference>
<dbReference type="GO" id="GO:0008360">
    <property type="term" value="P:regulation of cell shape"/>
    <property type="evidence" value="ECO:0007669"/>
    <property type="project" value="UniProtKB-KW"/>
</dbReference>
<dbReference type="CDD" id="cd03785">
    <property type="entry name" value="GT28_MurG"/>
    <property type="match status" value="1"/>
</dbReference>
<dbReference type="Gene3D" id="3.40.50.2000">
    <property type="entry name" value="Glycogen Phosphorylase B"/>
    <property type="match status" value="2"/>
</dbReference>
<dbReference type="HAMAP" id="MF_00033">
    <property type="entry name" value="MurG"/>
    <property type="match status" value="1"/>
</dbReference>
<dbReference type="InterPro" id="IPR006009">
    <property type="entry name" value="GlcNAc_MurG"/>
</dbReference>
<dbReference type="InterPro" id="IPR007235">
    <property type="entry name" value="Glyco_trans_28_C"/>
</dbReference>
<dbReference type="InterPro" id="IPR004276">
    <property type="entry name" value="GlycoTrans_28_N"/>
</dbReference>
<dbReference type="NCBIfam" id="NF009102">
    <property type="entry name" value="PRK12446.1"/>
    <property type="match status" value="1"/>
</dbReference>
<dbReference type="PANTHER" id="PTHR21015:SF27">
    <property type="entry name" value="UDP-N-ACETYLGLUCOSAMINE--N-ACETYLMURAMYL-(PENTAPEPTIDE) PYROPHOSPHORYL-UNDECAPRENOL N-ACETYLGLUCOSAMINE TRANSFERASE"/>
    <property type="match status" value="1"/>
</dbReference>
<dbReference type="PANTHER" id="PTHR21015">
    <property type="entry name" value="UDP-N-ACETYLGLUCOSAMINE--N-ACETYLMURAMYL-(PENTAPEPTIDE) PYROPHOSPHORYL-UNDECAPRENOL N-ACETYLGLUCOSAMINE TRANSFERASE 1"/>
    <property type="match status" value="1"/>
</dbReference>
<dbReference type="Pfam" id="PF04101">
    <property type="entry name" value="Glyco_tran_28_C"/>
    <property type="match status" value="1"/>
</dbReference>
<dbReference type="Pfam" id="PF03033">
    <property type="entry name" value="Glyco_transf_28"/>
    <property type="match status" value="1"/>
</dbReference>
<dbReference type="SUPFAM" id="SSF53756">
    <property type="entry name" value="UDP-Glycosyltransferase/glycogen phosphorylase"/>
    <property type="match status" value="1"/>
</dbReference>
<comment type="function">
    <text evidence="1">Cell wall formation. Catalyzes the transfer of a GlcNAc subunit on undecaprenyl-pyrophosphoryl-MurNAc-pentapeptide (lipid intermediate I) to form undecaprenyl-pyrophosphoryl-MurNAc-(pentapeptide)GlcNAc (lipid intermediate II).</text>
</comment>
<comment type="catalytic activity">
    <reaction evidence="1">
        <text>di-trans,octa-cis-undecaprenyl diphospho-N-acetyl-alpha-D-muramoyl-L-alanyl-D-glutamyl-meso-2,6-diaminopimeloyl-D-alanyl-D-alanine + UDP-N-acetyl-alpha-D-glucosamine = di-trans,octa-cis-undecaprenyl diphospho-[N-acetyl-alpha-D-glucosaminyl-(1-&gt;4)]-N-acetyl-alpha-D-muramoyl-L-alanyl-D-glutamyl-meso-2,6-diaminopimeloyl-D-alanyl-D-alanine + UDP + H(+)</text>
        <dbReference type="Rhea" id="RHEA:31227"/>
        <dbReference type="ChEBI" id="CHEBI:15378"/>
        <dbReference type="ChEBI" id="CHEBI:57705"/>
        <dbReference type="ChEBI" id="CHEBI:58223"/>
        <dbReference type="ChEBI" id="CHEBI:61387"/>
        <dbReference type="ChEBI" id="CHEBI:61388"/>
        <dbReference type="EC" id="2.4.1.227"/>
    </reaction>
</comment>
<comment type="pathway">
    <text evidence="1">Cell wall biogenesis; peptidoglycan biosynthesis.</text>
</comment>
<comment type="subcellular location">
    <subcellularLocation>
        <location evidence="1">Cell inner membrane</location>
        <topology evidence="1">Peripheral membrane protein</topology>
        <orientation evidence="1">Cytoplasmic side</orientation>
    </subcellularLocation>
</comment>
<comment type="similarity">
    <text evidence="1">Belongs to the glycosyltransferase 28 family. MurG subfamily.</text>
</comment>
<name>MURG_LEGPA</name>
<gene>
    <name evidence="1" type="primary">murG</name>
    <name type="ordered locus">lpp0870</name>
</gene>
<keyword id="KW-0131">Cell cycle</keyword>
<keyword id="KW-0132">Cell division</keyword>
<keyword id="KW-0997">Cell inner membrane</keyword>
<keyword id="KW-1003">Cell membrane</keyword>
<keyword id="KW-0133">Cell shape</keyword>
<keyword id="KW-0961">Cell wall biogenesis/degradation</keyword>
<keyword id="KW-0328">Glycosyltransferase</keyword>
<keyword id="KW-0472">Membrane</keyword>
<keyword id="KW-0573">Peptidoglycan synthesis</keyword>
<keyword id="KW-0808">Transferase</keyword>
<evidence type="ECO:0000255" key="1">
    <source>
        <dbReference type="HAMAP-Rule" id="MF_00033"/>
    </source>
</evidence>
<protein>
    <recommendedName>
        <fullName evidence="1">UDP-N-acetylglucosamine--N-acetylmuramyl-(pentapeptide) pyrophosphoryl-undecaprenol N-acetylglucosamine transferase</fullName>
        <ecNumber evidence="1">2.4.1.227</ecNumber>
    </recommendedName>
    <alternativeName>
        <fullName evidence="1">Undecaprenyl-PP-MurNAc-pentapeptide-UDPGlcNAc GlcNAc transferase</fullName>
    </alternativeName>
</protein>
<organism>
    <name type="scientific">Legionella pneumophila (strain Paris)</name>
    <dbReference type="NCBI Taxonomy" id="297246"/>
    <lineage>
        <taxon>Bacteria</taxon>
        <taxon>Pseudomonadati</taxon>
        <taxon>Pseudomonadota</taxon>
        <taxon>Gammaproteobacteria</taxon>
        <taxon>Legionellales</taxon>
        <taxon>Legionellaceae</taxon>
        <taxon>Legionella</taxon>
    </lineage>
</organism>